<gene>
    <name evidence="5" type="ordered locus">Bamb_3550</name>
</gene>
<evidence type="ECO:0000250" key="1">
    <source>
        <dbReference type="UniProtKB" id="Q4KGU2"/>
    </source>
</evidence>
<evidence type="ECO:0000269" key="2">
    <source>
    </source>
</evidence>
<evidence type="ECO:0000303" key="3">
    <source>
    </source>
</evidence>
<evidence type="ECO:0000305" key="4"/>
<evidence type="ECO:0000312" key="5">
    <source>
        <dbReference type="EMBL" id="ABI89104.1"/>
    </source>
</evidence>
<comment type="function">
    <text evidence="2">Catalyzes the epimerization of trans-4-hydroxy-L-proline (t4LHyp) to cis-4-hydroxy-D-proline (c4DHyp). Is likely involved in a degradation pathway that converts t4LHyp to alpha-ketoglutarate. Displays no proline racemase activity.</text>
</comment>
<comment type="catalytic activity">
    <reaction evidence="2">
        <text>trans-4-hydroxy-L-proline = cis-4-hydroxy-D-proline</text>
        <dbReference type="Rhea" id="RHEA:21152"/>
        <dbReference type="ChEBI" id="CHEBI:57690"/>
        <dbReference type="ChEBI" id="CHEBI:58375"/>
        <dbReference type="EC" id="5.1.1.8"/>
    </reaction>
</comment>
<comment type="similarity">
    <text evidence="4">Belongs to the proline racemase family.</text>
</comment>
<reference key="1">
    <citation type="submission" date="2006-08" db="EMBL/GenBank/DDBJ databases">
        <title>Complete sequence of chromosome 2 of Burkholderia cepacia AMMD.</title>
        <authorList>
            <person name="Copeland A."/>
            <person name="Lucas S."/>
            <person name="Lapidus A."/>
            <person name="Barry K."/>
            <person name="Detter J.C."/>
            <person name="Glavina del Rio T."/>
            <person name="Hammon N."/>
            <person name="Israni S."/>
            <person name="Pitluck S."/>
            <person name="Bruce D."/>
            <person name="Chain P."/>
            <person name="Malfatti S."/>
            <person name="Shin M."/>
            <person name="Vergez L."/>
            <person name="Schmutz J."/>
            <person name="Larimer F."/>
            <person name="Land M."/>
            <person name="Hauser L."/>
            <person name="Kyrpides N."/>
            <person name="Kim E."/>
            <person name="Parke J."/>
            <person name="Coenye T."/>
            <person name="Konstantinidis K."/>
            <person name="Ramette A."/>
            <person name="Tiedje J."/>
            <person name="Richardson P."/>
        </authorList>
    </citation>
    <scope>NUCLEOTIDE SEQUENCE [LARGE SCALE GENOMIC DNA]</scope>
    <source>
        <strain>ATCC BAA-244 / DSM 16087 / CCUG 44356 / LMG 19182 / AMMD</strain>
    </source>
</reference>
<reference key="2">
    <citation type="journal article" date="2014" name="Elife">
        <title>Prediction and characterization of enzymatic activities guided by sequence similarity and genome neighborhood networks.</title>
        <authorList>
            <person name="Zhao S."/>
            <person name="Sakai A."/>
            <person name="Zhang X."/>
            <person name="Vetting M.W."/>
            <person name="Kumar R."/>
            <person name="Hillerich B."/>
            <person name="San Francisco B."/>
            <person name="Solbiati J."/>
            <person name="Steves A."/>
            <person name="Brown S."/>
            <person name="Akiva E."/>
            <person name="Barber A."/>
            <person name="Seidel R.D."/>
            <person name="Babbitt P.C."/>
            <person name="Almo S.C."/>
            <person name="Gerlt J.A."/>
            <person name="Jacobson M.P."/>
        </authorList>
    </citation>
    <scope>FUNCTION</scope>
    <scope>CATALYTIC ACTIVITY</scope>
</reference>
<name>4HYPE_BURCM</name>
<proteinExistence type="evidence at protein level"/>
<dbReference type="EC" id="5.1.1.8" evidence="2"/>
<dbReference type="EMBL" id="CP000441">
    <property type="protein sequence ID" value="ABI89104.1"/>
    <property type="molecule type" value="Genomic_DNA"/>
</dbReference>
<dbReference type="SMR" id="Q0B9R9"/>
<dbReference type="KEGG" id="bam:Bamb_3550"/>
<dbReference type="eggNOG" id="COG3938">
    <property type="taxonomic scope" value="Bacteria"/>
</dbReference>
<dbReference type="Proteomes" id="UP000000662">
    <property type="component" value="Chromosome 2"/>
</dbReference>
<dbReference type="GO" id="GO:0047580">
    <property type="term" value="F:4-hydroxyproline epimerase activity"/>
    <property type="evidence" value="ECO:0007669"/>
    <property type="project" value="UniProtKB-EC"/>
</dbReference>
<dbReference type="FunFam" id="3.10.310.10:FF:000012">
    <property type="entry name" value="4-hydroxyproline 2-epimerase"/>
    <property type="match status" value="1"/>
</dbReference>
<dbReference type="Gene3D" id="3.10.310.10">
    <property type="entry name" value="Diaminopimelate Epimerase, Chain A, domain 1"/>
    <property type="match status" value="2"/>
</dbReference>
<dbReference type="InterPro" id="IPR008794">
    <property type="entry name" value="Pro_racemase_fam"/>
</dbReference>
<dbReference type="NCBIfam" id="NF010577">
    <property type="entry name" value="PRK13970.1"/>
    <property type="match status" value="1"/>
</dbReference>
<dbReference type="PANTHER" id="PTHR33442">
    <property type="entry name" value="TRANS-3-HYDROXY-L-PROLINE DEHYDRATASE"/>
    <property type="match status" value="1"/>
</dbReference>
<dbReference type="PANTHER" id="PTHR33442:SF1">
    <property type="entry name" value="TRANS-3-HYDROXY-L-PROLINE DEHYDRATASE"/>
    <property type="match status" value="1"/>
</dbReference>
<dbReference type="Pfam" id="PF05544">
    <property type="entry name" value="Pro_racemase"/>
    <property type="match status" value="1"/>
</dbReference>
<dbReference type="PIRSF" id="PIRSF029792">
    <property type="entry name" value="Pro_racemase"/>
    <property type="match status" value="1"/>
</dbReference>
<dbReference type="SFLD" id="SFLDS00028">
    <property type="entry name" value="Proline_Racemase"/>
    <property type="match status" value="1"/>
</dbReference>
<dbReference type="SUPFAM" id="SSF54506">
    <property type="entry name" value="Diaminopimelate epimerase-like"/>
    <property type="match status" value="1"/>
</dbReference>
<keyword id="KW-0413">Isomerase</keyword>
<organism>
    <name type="scientific">Burkholderia ambifaria (strain ATCC BAA-244 / DSM 16087 / CCUG 44356 / LMG 19182 / AMMD)</name>
    <name type="common">Burkholderia cepacia (strain AMMD)</name>
    <dbReference type="NCBI Taxonomy" id="339670"/>
    <lineage>
        <taxon>Bacteria</taxon>
        <taxon>Pseudomonadati</taxon>
        <taxon>Pseudomonadota</taxon>
        <taxon>Betaproteobacteria</taxon>
        <taxon>Burkholderiales</taxon>
        <taxon>Burkholderiaceae</taxon>
        <taxon>Burkholderia</taxon>
        <taxon>Burkholderia cepacia complex</taxon>
    </lineage>
</organism>
<sequence length="311" mass="32880">MMKRIQIIDSHTGGEPTRLVVSGFPSLGNGTMAERRDVLAREHNRYRTACILEPRGSDVMVGALLCEPVSPEAAAGVIFFNNSGYLGMCGHGTIGVVRTLHHMGRIEPGVHRIETPVGTVEATLHDDLSVSVRNVLAYRHAKAVAVDVPGYGPVKGDIAWGGNWFFLISDHGQRVAGDNVAALTAYSSAVREGLERAGITGANGGEIDHIELFADDAEHDSRSFVLCPGHAYDRSPCGTGTSAKLACLAADGKLEPGVVWRQASVIGSVFQASYAQADGGIVPTIRGSAHLSAEATLLIEEDDPFGWGIVS</sequence>
<feature type="chain" id="PRO_0000432281" description="4-hydroxyproline 2-epimerase">
    <location>
        <begin position="1"/>
        <end position="311"/>
    </location>
</feature>
<feature type="active site" description="Proton acceptor" evidence="1">
    <location>
        <position position="89"/>
    </location>
</feature>
<feature type="active site" description="Proton donor" evidence="1">
    <location>
        <position position="237"/>
    </location>
</feature>
<feature type="binding site" evidence="1">
    <location>
        <begin position="90"/>
        <end position="91"/>
    </location>
    <ligand>
        <name>substrate</name>
    </ligand>
</feature>
<feature type="binding site" evidence="1">
    <location>
        <position position="209"/>
    </location>
    <ligand>
        <name>substrate</name>
    </ligand>
</feature>
<feature type="binding site" evidence="1">
    <location>
        <position position="233"/>
    </location>
    <ligand>
        <name>substrate</name>
    </ligand>
</feature>
<feature type="binding site" evidence="1">
    <location>
        <begin position="238"/>
        <end position="239"/>
    </location>
    <ligand>
        <name>substrate</name>
    </ligand>
</feature>
<protein>
    <recommendedName>
        <fullName evidence="3">4-hydroxyproline 2-epimerase</fullName>
        <shortName>4Hyp 2-epimerase</shortName>
        <shortName evidence="3">4HypE</shortName>
        <ecNumber evidence="2">5.1.1.8</ecNumber>
    </recommendedName>
</protein>
<accession>Q0B9R9</accession>